<proteinExistence type="predicted"/>
<keyword id="KW-1185">Reference proteome</keyword>
<name>Y228_HAEIN</name>
<reference key="1">
    <citation type="journal article" date="1995" name="Science">
        <title>Whole-genome random sequencing and assembly of Haemophilus influenzae Rd.</title>
        <authorList>
            <person name="Fleischmann R.D."/>
            <person name="Adams M.D."/>
            <person name="White O."/>
            <person name="Clayton R.A."/>
            <person name="Kirkness E.F."/>
            <person name="Kerlavage A.R."/>
            <person name="Bult C.J."/>
            <person name="Tomb J.-F."/>
            <person name="Dougherty B.A."/>
            <person name="Merrick J.M."/>
            <person name="McKenney K."/>
            <person name="Sutton G.G."/>
            <person name="FitzHugh W."/>
            <person name="Fields C.A."/>
            <person name="Gocayne J.D."/>
            <person name="Scott J.D."/>
            <person name="Shirley R."/>
            <person name="Liu L.-I."/>
            <person name="Glodek A."/>
            <person name="Kelley J.M."/>
            <person name="Weidman J.F."/>
            <person name="Phillips C.A."/>
            <person name="Spriggs T."/>
            <person name="Hedblom E."/>
            <person name="Cotton M.D."/>
            <person name="Utterback T.R."/>
            <person name="Hanna M.C."/>
            <person name="Nguyen D.T."/>
            <person name="Saudek D.M."/>
            <person name="Brandon R.C."/>
            <person name="Fine L.D."/>
            <person name="Fritchman J.L."/>
            <person name="Fuhrmann J.L."/>
            <person name="Geoghagen N.S.M."/>
            <person name="Gnehm C.L."/>
            <person name="McDonald L.A."/>
            <person name="Small K.V."/>
            <person name="Fraser C.M."/>
            <person name="Smith H.O."/>
            <person name="Venter J.C."/>
        </authorList>
    </citation>
    <scope>NUCLEOTIDE SEQUENCE [LARGE SCALE GENOMIC DNA]</scope>
    <source>
        <strain>ATCC 51907 / DSM 11121 / KW20 / Rd</strain>
    </source>
</reference>
<feature type="chain" id="PRO_0000077899" description="Uncharacterized protein HI_0228">
    <location>
        <begin position="1"/>
        <end position="124"/>
    </location>
</feature>
<protein>
    <recommendedName>
        <fullName>Uncharacterized protein HI_0228</fullName>
    </recommendedName>
</protein>
<sequence>MMLIIFLNVEITLKSLLMHNENLSVFILHTGDISESWQNDLQLYFAKRYSTLQLVHMISINTLDTSPNIFHFTGPHKPLDNIFSENACVNAVISLFRLYASISWQDICSLPLGTTRANWINQER</sequence>
<organism>
    <name type="scientific">Haemophilus influenzae (strain ATCC 51907 / DSM 11121 / KW20 / Rd)</name>
    <dbReference type="NCBI Taxonomy" id="71421"/>
    <lineage>
        <taxon>Bacteria</taxon>
        <taxon>Pseudomonadati</taxon>
        <taxon>Pseudomonadota</taxon>
        <taxon>Gammaproteobacteria</taxon>
        <taxon>Pasteurellales</taxon>
        <taxon>Pasteurellaceae</taxon>
        <taxon>Haemophilus</taxon>
    </lineage>
</organism>
<gene>
    <name type="ordered locus">HI_0228</name>
</gene>
<accession>P43966</accession>
<dbReference type="EMBL" id="L42023">
    <property type="protein sequence ID" value="AAC21902.1"/>
    <property type="molecule type" value="Genomic_DNA"/>
</dbReference>
<dbReference type="PIR" id="B64004">
    <property type="entry name" value="B64004"/>
</dbReference>
<dbReference type="SMR" id="P43966"/>
<dbReference type="STRING" id="71421.HI_0228"/>
<dbReference type="EnsemblBacteria" id="AAC21902">
    <property type="protein sequence ID" value="AAC21902"/>
    <property type="gene ID" value="HI_0228"/>
</dbReference>
<dbReference type="KEGG" id="hin:HI_0228"/>
<dbReference type="HOGENOM" id="CLU_1872539_0_0_6"/>
<dbReference type="Proteomes" id="UP000000579">
    <property type="component" value="Chromosome"/>
</dbReference>